<keyword id="KW-0028">Amino-acid biosynthesis</keyword>
<keyword id="KW-0057">Aromatic amino acid biosynthesis</keyword>
<keyword id="KW-0413">Isomerase</keyword>
<keyword id="KW-1185">Reference proteome</keyword>
<keyword id="KW-0822">Tryptophan biosynthesis</keyword>
<sequence>MTSPMQRTRVKICGLTREEDIDAAVAAGADALGFVLWPGSSRAIDEARLARLAARVPAFVTRVGLFVDQADDEIRRYARHLDLVQLHGNESPDDCARLDTPWIKALRMRDGIDLHAEMSRYDAARGLLLDAYRPGVPGGTGETFDWSRIPANLAKPVILAGGLTADNVAEAIHRVRPYAVDVSGGVEAAKGLKDPARIRAFLSQVSHTQAP</sequence>
<proteinExistence type="inferred from homology"/>
<gene>
    <name evidence="1" type="primary">trpF</name>
    <name type="ordered locus">Csal_1260</name>
</gene>
<reference key="1">
    <citation type="journal article" date="2011" name="Stand. Genomic Sci.">
        <title>Complete genome sequence of the halophilic and highly halotolerant Chromohalobacter salexigens type strain (1H11(T)).</title>
        <authorList>
            <person name="Copeland A."/>
            <person name="O'Connor K."/>
            <person name="Lucas S."/>
            <person name="Lapidus A."/>
            <person name="Berry K.W."/>
            <person name="Detter J.C."/>
            <person name="Del Rio T.G."/>
            <person name="Hammon N."/>
            <person name="Dalin E."/>
            <person name="Tice H."/>
            <person name="Pitluck S."/>
            <person name="Bruce D."/>
            <person name="Goodwin L."/>
            <person name="Han C."/>
            <person name="Tapia R."/>
            <person name="Saunders E."/>
            <person name="Schmutz J."/>
            <person name="Brettin T."/>
            <person name="Larimer F."/>
            <person name="Land M."/>
            <person name="Hauser L."/>
            <person name="Vargas C."/>
            <person name="Nieto J.J."/>
            <person name="Kyrpides N.C."/>
            <person name="Ivanova N."/>
            <person name="Goker M."/>
            <person name="Klenk H.P."/>
            <person name="Csonka L.N."/>
            <person name="Woyke T."/>
        </authorList>
    </citation>
    <scope>NUCLEOTIDE SEQUENCE [LARGE SCALE GENOMIC DNA]</scope>
    <source>
        <strain>ATCC BAA-138 / DSM 3043 / CIP 106854 / NCIMB 13768 / 1H11</strain>
    </source>
</reference>
<accession>Q1QY43</accession>
<comment type="catalytic activity">
    <reaction evidence="1">
        <text>N-(5-phospho-beta-D-ribosyl)anthranilate = 1-(2-carboxyphenylamino)-1-deoxy-D-ribulose 5-phosphate</text>
        <dbReference type="Rhea" id="RHEA:21540"/>
        <dbReference type="ChEBI" id="CHEBI:18277"/>
        <dbReference type="ChEBI" id="CHEBI:58613"/>
        <dbReference type="EC" id="5.3.1.24"/>
    </reaction>
</comment>
<comment type="pathway">
    <text evidence="1">Amino-acid biosynthesis; L-tryptophan biosynthesis; L-tryptophan from chorismate: step 3/5.</text>
</comment>
<comment type="similarity">
    <text evidence="1">Belongs to the TrpF family.</text>
</comment>
<name>TRPF_CHRSD</name>
<evidence type="ECO:0000255" key="1">
    <source>
        <dbReference type="HAMAP-Rule" id="MF_00135"/>
    </source>
</evidence>
<protein>
    <recommendedName>
        <fullName evidence="1">N-(5'-phosphoribosyl)anthranilate isomerase</fullName>
        <shortName evidence="1">PRAI</shortName>
        <ecNumber evidence="1">5.3.1.24</ecNumber>
    </recommendedName>
</protein>
<dbReference type="EC" id="5.3.1.24" evidence="1"/>
<dbReference type="EMBL" id="CP000285">
    <property type="protein sequence ID" value="ABE58615.1"/>
    <property type="molecule type" value="Genomic_DNA"/>
</dbReference>
<dbReference type="RefSeq" id="WP_011506561.1">
    <property type="nucleotide sequence ID" value="NC_007963.1"/>
</dbReference>
<dbReference type="SMR" id="Q1QY43"/>
<dbReference type="STRING" id="290398.Csal_1260"/>
<dbReference type="GeneID" id="95334000"/>
<dbReference type="KEGG" id="csa:Csal_1260"/>
<dbReference type="eggNOG" id="COG0135">
    <property type="taxonomic scope" value="Bacteria"/>
</dbReference>
<dbReference type="HOGENOM" id="CLU_076364_2_0_6"/>
<dbReference type="OrthoDB" id="9796196at2"/>
<dbReference type="UniPathway" id="UPA00035">
    <property type="reaction ID" value="UER00042"/>
</dbReference>
<dbReference type="Proteomes" id="UP000000239">
    <property type="component" value="Chromosome"/>
</dbReference>
<dbReference type="GO" id="GO:0004640">
    <property type="term" value="F:phosphoribosylanthranilate isomerase activity"/>
    <property type="evidence" value="ECO:0007669"/>
    <property type="project" value="UniProtKB-UniRule"/>
</dbReference>
<dbReference type="GO" id="GO:0000162">
    <property type="term" value="P:L-tryptophan biosynthetic process"/>
    <property type="evidence" value="ECO:0007669"/>
    <property type="project" value="UniProtKB-UniRule"/>
</dbReference>
<dbReference type="CDD" id="cd00405">
    <property type="entry name" value="PRAI"/>
    <property type="match status" value="1"/>
</dbReference>
<dbReference type="FunFam" id="3.20.20.70:FF:000075">
    <property type="entry name" value="Tryptophan biosynthesis protein TRP1"/>
    <property type="match status" value="1"/>
</dbReference>
<dbReference type="Gene3D" id="3.20.20.70">
    <property type="entry name" value="Aldolase class I"/>
    <property type="match status" value="1"/>
</dbReference>
<dbReference type="HAMAP" id="MF_00135">
    <property type="entry name" value="PRAI"/>
    <property type="match status" value="1"/>
</dbReference>
<dbReference type="InterPro" id="IPR013785">
    <property type="entry name" value="Aldolase_TIM"/>
</dbReference>
<dbReference type="InterPro" id="IPR001240">
    <property type="entry name" value="PRAI_dom"/>
</dbReference>
<dbReference type="InterPro" id="IPR011060">
    <property type="entry name" value="RibuloseP-bd_barrel"/>
</dbReference>
<dbReference type="InterPro" id="IPR044643">
    <property type="entry name" value="TrpF_fam"/>
</dbReference>
<dbReference type="NCBIfam" id="NF002298">
    <property type="entry name" value="PRK01222.1-4"/>
    <property type="match status" value="1"/>
</dbReference>
<dbReference type="NCBIfam" id="NF002299">
    <property type="entry name" value="PRK01222.1-6"/>
    <property type="match status" value="1"/>
</dbReference>
<dbReference type="PANTHER" id="PTHR42894">
    <property type="entry name" value="N-(5'-PHOSPHORIBOSYL)ANTHRANILATE ISOMERASE"/>
    <property type="match status" value="1"/>
</dbReference>
<dbReference type="PANTHER" id="PTHR42894:SF1">
    <property type="entry name" value="N-(5'-PHOSPHORIBOSYL)ANTHRANILATE ISOMERASE"/>
    <property type="match status" value="1"/>
</dbReference>
<dbReference type="Pfam" id="PF00697">
    <property type="entry name" value="PRAI"/>
    <property type="match status" value="1"/>
</dbReference>
<dbReference type="SUPFAM" id="SSF51366">
    <property type="entry name" value="Ribulose-phoshate binding barrel"/>
    <property type="match status" value="1"/>
</dbReference>
<feature type="chain" id="PRO_1000197092" description="N-(5'-phosphoribosyl)anthranilate isomerase">
    <location>
        <begin position="1"/>
        <end position="211"/>
    </location>
</feature>
<organism>
    <name type="scientific">Chromohalobacter salexigens (strain ATCC BAA-138 / DSM 3043 / CIP 106854 / NCIMB 13768 / 1H11)</name>
    <dbReference type="NCBI Taxonomy" id="290398"/>
    <lineage>
        <taxon>Bacteria</taxon>
        <taxon>Pseudomonadati</taxon>
        <taxon>Pseudomonadota</taxon>
        <taxon>Gammaproteobacteria</taxon>
        <taxon>Oceanospirillales</taxon>
        <taxon>Halomonadaceae</taxon>
        <taxon>Chromohalobacter</taxon>
    </lineage>
</organism>